<organism>
    <name type="scientific">Xenopus tropicalis</name>
    <name type="common">Western clawed frog</name>
    <name type="synonym">Silurana tropicalis</name>
    <dbReference type="NCBI Taxonomy" id="8364"/>
    <lineage>
        <taxon>Eukaryota</taxon>
        <taxon>Metazoa</taxon>
        <taxon>Chordata</taxon>
        <taxon>Craniata</taxon>
        <taxon>Vertebrata</taxon>
        <taxon>Euteleostomi</taxon>
        <taxon>Amphibia</taxon>
        <taxon>Batrachia</taxon>
        <taxon>Anura</taxon>
        <taxon>Pipoidea</taxon>
        <taxon>Pipidae</taxon>
        <taxon>Xenopodinae</taxon>
        <taxon>Xenopus</taxon>
        <taxon>Silurana</taxon>
    </lineage>
</organism>
<accession>Q6NVM0</accession>
<dbReference type="EMBL" id="BC067985">
    <property type="protein sequence ID" value="AAH67985.1"/>
    <property type="molecule type" value="mRNA"/>
</dbReference>
<dbReference type="RefSeq" id="NP_998836.1">
    <property type="nucleotide sequence ID" value="NM_213671.1"/>
</dbReference>
<dbReference type="SMR" id="Q6NVM0"/>
<dbReference type="FunCoup" id="Q6NVM0">
    <property type="interactions" value="786"/>
</dbReference>
<dbReference type="STRING" id="8364.ENSXETP00000042746"/>
<dbReference type="PaxDb" id="8364-ENSXETP00000034845"/>
<dbReference type="DNASU" id="407939"/>
<dbReference type="GeneID" id="407939"/>
<dbReference type="KEGG" id="xtr:407939"/>
<dbReference type="AGR" id="Xenbase:XB-GENE-480028"/>
<dbReference type="CTD" id="3005"/>
<dbReference type="Xenbase" id="XB-GENE-480028">
    <property type="gene designation" value="h1-0"/>
</dbReference>
<dbReference type="eggNOG" id="KOG4012">
    <property type="taxonomic scope" value="Eukaryota"/>
</dbReference>
<dbReference type="HOGENOM" id="CLU_052897_1_1_1"/>
<dbReference type="InParanoid" id="Q6NVM0"/>
<dbReference type="OMA" id="IKNHYKV"/>
<dbReference type="OrthoDB" id="1110759at2759"/>
<dbReference type="PhylomeDB" id="Q6NVM0"/>
<dbReference type="TreeFam" id="TF313664"/>
<dbReference type="Proteomes" id="UP000008143">
    <property type="component" value="Chromosome 4"/>
</dbReference>
<dbReference type="Bgee" id="ENSXETG00000041200">
    <property type="expression patterns" value="Expressed in heart and 21 other cell types or tissues"/>
</dbReference>
<dbReference type="GO" id="GO:0000786">
    <property type="term" value="C:nucleosome"/>
    <property type="evidence" value="ECO:0007669"/>
    <property type="project" value="InterPro"/>
</dbReference>
<dbReference type="GO" id="GO:0005634">
    <property type="term" value="C:nucleus"/>
    <property type="evidence" value="ECO:0007669"/>
    <property type="project" value="UniProtKB-SubCell"/>
</dbReference>
<dbReference type="GO" id="GO:0003677">
    <property type="term" value="F:DNA binding"/>
    <property type="evidence" value="ECO:0007669"/>
    <property type="project" value="UniProtKB-KW"/>
</dbReference>
<dbReference type="GO" id="GO:0030527">
    <property type="term" value="F:structural constituent of chromatin"/>
    <property type="evidence" value="ECO:0007669"/>
    <property type="project" value="InterPro"/>
</dbReference>
<dbReference type="GO" id="GO:0030261">
    <property type="term" value="P:chromosome condensation"/>
    <property type="evidence" value="ECO:0007669"/>
    <property type="project" value="UniProtKB-KW"/>
</dbReference>
<dbReference type="GO" id="GO:0006334">
    <property type="term" value="P:nucleosome assembly"/>
    <property type="evidence" value="ECO:0007669"/>
    <property type="project" value="InterPro"/>
</dbReference>
<dbReference type="CDD" id="cd00073">
    <property type="entry name" value="H15"/>
    <property type="match status" value="1"/>
</dbReference>
<dbReference type="FunFam" id="1.10.10.10:FF:000140">
    <property type="entry name" value="Histone H1.0"/>
    <property type="match status" value="1"/>
</dbReference>
<dbReference type="Gene3D" id="1.10.10.10">
    <property type="entry name" value="Winged helix-like DNA-binding domain superfamily/Winged helix DNA-binding domain"/>
    <property type="match status" value="1"/>
</dbReference>
<dbReference type="InterPro" id="IPR005819">
    <property type="entry name" value="H1/H5"/>
</dbReference>
<dbReference type="InterPro" id="IPR005818">
    <property type="entry name" value="Histone_H1/H5_H15"/>
</dbReference>
<dbReference type="InterPro" id="IPR036388">
    <property type="entry name" value="WH-like_DNA-bd_sf"/>
</dbReference>
<dbReference type="InterPro" id="IPR036390">
    <property type="entry name" value="WH_DNA-bd_sf"/>
</dbReference>
<dbReference type="PANTHER" id="PTHR11467">
    <property type="entry name" value="HISTONE H1"/>
    <property type="match status" value="1"/>
</dbReference>
<dbReference type="PANTHER" id="PTHR11467:SF182">
    <property type="entry name" value="HISTONE H1.0"/>
    <property type="match status" value="1"/>
</dbReference>
<dbReference type="Pfam" id="PF00538">
    <property type="entry name" value="Linker_histone"/>
    <property type="match status" value="1"/>
</dbReference>
<dbReference type="PRINTS" id="PR00624">
    <property type="entry name" value="HISTONEH5"/>
</dbReference>
<dbReference type="SMART" id="SM00526">
    <property type="entry name" value="H15"/>
    <property type="match status" value="1"/>
</dbReference>
<dbReference type="SUPFAM" id="SSF46785">
    <property type="entry name" value="Winged helix' DNA-binding domain"/>
    <property type="match status" value="1"/>
</dbReference>
<dbReference type="PROSITE" id="PS51504">
    <property type="entry name" value="H15"/>
    <property type="match status" value="1"/>
</dbReference>
<name>H10_XENTR</name>
<reference key="1">
    <citation type="submission" date="2004-03" db="EMBL/GenBank/DDBJ databases">
        <authorList>
            <consortium name="NIH - Xenopus Gene Collection (XGC) project"/>
        </authorList>
    </citation>
    <scope>NUCLEOTIDE SEQUENCE [LARGE SCALE MRNA]</scope>
    <source>
        <tissue>Embryo</tissue>
    </source>
</reference>
<feature type="chain" id="PRO_0000259965" description="Histone H1.0">
    <location>
        <begin position="1"/>
        <end position="196"/>
    </location>
</feature>
<feature type="domain" description="H15" evidence="2">
    <location>
        <begin position="24"/>
        <end position="97"/>
    </location>
</feature>
<feature type="region of interest" description="Disordered" evidence="3">
    <location>
        <begin position="1"/>
        <end position="29"/>
    </location>
</feature>
<feature type="region of interest" description="Disordered" evidence="3">
    <location>
        <begin position="78"/>
        <end position="196"/>
    </location>
</feature>
<feature type="compositionally biased region" description="Basic residues" evidence="3">
    <location>
        <begin position="104"/>
        <end position="196"/>
    </location>
</feature>
<keyword id="KW-0158">Chromosome</keyword>
<keyword id="KW-0226">DNA condensation</keyword>
<keyword id="KW-0238">DNA-binding</keyword>
<keyword id="KW-0539">Nucleus</keyword>
<keyword id="KW-1185">Reference proteome</keyword>
<gene>
    <name type="primary">h1-0</name>
</gene>
<proteinExistence type="evidence at transcript level"/>
<sequence length="196" mass="21006">MTENSAAAPAGKPKRSKASKKATDHPKYSDMILAAVQAEKSRSGSSRQSIQKYIKNHYKVGENADSQIKLSIKRLVTSGTLKQTKGVGASGSFRLAKADEGKKPAKKPKKEIKKAASPKKAAKPKKAAKSPAKAKKPKVAEKKVKKPAKKKPAPSPKKAKKTKTVKAKPVRASRVKKAKPSKPKAKASPKKSGRKK</sequence>
<evidence type="ECO:0000250" key="1"/>
<evidence type="ECO:0000255" key="2">
    <source>
        <dbReference type="PROSITE-ProRule" id="PRU00837"/>
    </source>
</evidence>
<evidence type="ECO:0000256" key="3">
    <source>
        <dbReference type="SAM" id="MobiDB-lite"/>
    </source>
</evidence>
<protein>
    <recommendedName>
        <fullName>Histone H1.0</fullName>
    </recommendedName>
    <alternativeName>
        <fullName>Histone H1(0)</fullName>
    </alternativeName>
    <alternativeName>
        <fullName>Histone H5</fullName>
    </alternativeName>
</protein>
<comment type="function">
    <text evidence="1">Histones H1 are necessary for the condensation of nucleosome chains into higher-order structures. The histones H1.0 are found in cells that are in terminal stages of differentiation or that have low rates of cell division (By similarity).</text>
</comment>
<comment type="subcellular location">
    <subcellularLocation>
        <location evidence="2">Nucleus</location>
    </subcellularLocation>
    <subcellularLocation>
        <location evidence="2">Chromosome</location>
    </subcellularLocation>
</comment>
<comment type="similarity">
    <text evidence="2">Belongs to the histone H1/H5 family.</text>
</comment>